<name>NU4C_ORYSA</name>
<evidence type="ECO:0000255" key="1"/>
<evidence type="ECO:0000305" key="2"/>
<sequence>MSSFPWLTILVVLPIFAGSLIFFLPHRGNKIVRWYTMSICLLEFLLMTYAFCYHFQLEDPLIQLKEDSKWIDVFNFHWRLGIDGLSLGSILLTGFMTTLATLAAWPVTRNSRLFYFLMLAMYSGQIGLFSSRDLLLFFIMWELELIPVYLLLSMWGGKRRLYSATKFILYTAGGSIFFLIGVLGMGLYGSNEPRLDLERLINQSYPATLEILFYFGFLIAYAVKLPIIPLHTWLPDTHGEAHYSTCMLLAGILLKMGAYGLIRINMELLPHAHYLFSPWLVIIGAMQIIYAASTSLGQRNFKKRIAYSSVSHMGFIIIGIGSITNIGLNGAILQILSHGFIGATLFFLAGTACDRMRLVYLEELGGVSIPMPKIFTMFSSFSMASLALPGMSGFVAELVVFFGLITSPKFLLMPKMLITFVMAIGMILTPIYLLSMLRQMFYGYKLFHVPNENFEDSGPRELFLLICIFLPVIGIGIYPDFVLSLSVDRVEALLSNYYPK</sequence>
<gene>
    <name type="primary">ndhD</name>
    <name type="ORF">PA169</name>
</gene>
<organism>
    <name type="scientific">Oryza sativa</name>
    <name type="common">Rice</name>
    <dbReference type="NCBI Taxonomy" id="4530"/>
    <lineage>
        <taxon>Eukaryota</taxon>
        <taxon>Viridiplantae</taxon>
        <taxon>Streptophyta</taxon>
        <taxon>Embryophyta</taxon>
        <taxon>Tracheophyta</taxon>
        <taxon>Spermatophyta</taxon>
        <taxon>Magnoliopsida</taxon>
        <taxon>Liliopsida</taxon>
        <taxon>Poales</taxon>
        <taxon>Poaceae</taxon>
        <taxon>BOP clade</taxon>
        <taxon>Oryzoideae</taxon>
        <taxon>Oryzeae</taxon>
        <taxon>Oryzinae</taxon>
        <taxon>Oryza</taxon>
    </lineage>
</organism>
<protein>
    <recommendedName>
        <fullName>NAD(P)H-quinone oxidoreductase chain 4, chloroplastic</fullName>
        <ecNumber>7.1.1.-</ecNumber>
    </recommendedName>
    <alternativeName>
        <fullName>NAD(P)H dehydrogenase, chain 4</fullName>
    </alternativeName>
    <alternativeName>
        <fullName>NADH-plastoquinone oxidoreductase chain 4</fullName>
    </alternativeName>
</protein>
<dbReference type="EC" id="7.1.1.-"/>
<dbReference type="EMBL" id="AY522331">
    <property type="protein sequence ID" value="AAS46220.1"/>
    <property type="molecule type" value="Genomic_DNA"/>
</dbReference>
<dbReference type="RefSeq" id="YP_009305362.1">
    <property type="nucleotide sequence ID" value="NC_031333.1"/>
</dbReference>
<dbReference type="SMR" id="P0C323"/>
<dbReference type="GeneID" id="29141438"/>
<dbReference type="GO" id="GO:0009535">
    <property type="term" value="C:chloroplast thylakoid membrane"/>
    <property type="evidence" value="ECO:0007669"/>
    <property type="project" value="UniProtKB-SubCell"/>
</dbReference>
<dbReference type="GO" id="GO:0009536">
    <property type="term" value="C:plastid"/>
    <property type="evidence" value="ECO:0000305"/>
    <property type="project" value="Gramene"/>
</dbReference>
<dbReference type="GO" id="GO:0008137">
    <property type="term" value="F:NADH dehydrogenase (ubiquinone) activity"/>
    <property type="evidence" value="ECO:0007669"/>
    <property type="project" value="InterPro"/>
</dbReference>
<dbReference type="GO" id="GO:0048039">
    <property type="term" value="F:ubiquinone binding"/>
    <property type="evidence" value="ECO:0007669"/>
    <property type="project" value="TreeGrafter"/>
</dbReference>
<dbReference type="GO" id="GO:0042773">
    <property type="term" value="P:ATP synthesis coupled electron transport"/>
    <property type="evidence" value="ECO:0007669"/>
    <property type="project" value="InterPro"/>
</dbReference>
<dbReference type="GO" id="GO:0015990">
    <property type="term" value="P:electron transport coupled proton transport"/>
    <property type="evidence" value="ECO:0007669"/>
    <property type="project" value="TreeGrafter"/>
</dbReference>
<dbReference type="HAMAP" id="MF_00491">
    <property type="entry name" value="NDH1_NuoM"/>
    <property type="match status" value="1"/>
</dbReference>
<dbReference type="InterPro" id="IPR022997">
    <property type="entry name" value="NADH_Q_OxRdtase_chain4"/>
</dbReference>
<dbReference type="InterPro" id="IPR010227">
    <property type="entry name" value="NADH_Q_OxRdtase_chainM/4"/>
</dbReference>
<dbReference type="InterPro" id="IPR003918">
    <property type="entry name" value="NADH_UbQ_OxRdtase"/>
</dbReference>
<dbReference type="InterPro" id="IPR001750">
    <property type="entry name" value="ND/Mrp_TM"/>
</dbReference>
<dbReference type="NCBIfam" id="TIGR01972">
    <property type="entry name" value="NDH_I_M"/>
    <property type="match status" value="1"/>
</dbReference>
<dbReference type="PANTHER" id="PTHR43507:SF21">
    <property type="entry name" value="NAD(P)H-QUINONE OXIDOREDUCTASE CHAIN 4, CHLOROPLASTIC"/>
    <property type="match status" value="1"/>
</dbReference>
<dbReference type="PANTHER" id="PTHR43507">
    <property type="entry name" value="NADH-UBIQUINONE OXIDOREDUCTASE CHAIN 4"/>
    <property type="match status" value="1"/>
</dbReference>
<dbReference type="Pfam" id="PF00361">
    <property type="entry name" value="Proton_antipo_M"/>
    <property type="match status" value="1"/>
</dbReference>
<dbReference type="PRINTS" id="PR01437">
    <property type="entry name" value="NUOXDRDTASE4"/>
</dbReference>
<proteinExistence type="inferred from homology"/>
<feature type="chain" id="PRO_0000118024" description="NAD(P)H-quinone oxidoreductase chain 4, chloroplastic">
    <location>
        <begin position="1"/>
        <end position="500"/>
    </location>
</feature>
<feature type="transmembrane region" description="Helical" evidence="1">
    <location>
        <begin position="4"/>
        <end position="24"/>
    </location>
</feature>
<feature type="transmembrane region" description="Helical" evidence="1">
    <location>
        <begin position="37"/>
        <end position="57"/>
    </location>
</feature>
<feature type="transmembrane region" description="Helical" evidence="1">
    <location>
        <begin position="87"/>
        <end position="107"/>
    </location>
</feature>
<feature type="transmembrane region" description="Helical" evidence="1">
    <location>
        <begin position="113"/>
        <end position="130"/>
    </location>
</feature>
<feature type="transmembrane region" description="Helical" evidence="1">
    <location>
        <begin position="134"/>
        <end position="154"/>
    </location>
</feature>
<feature type="transmembrane region" description="Helical" evidence="1">
    <location>
        <begin position="167"/>
        <end position="187"/>
    </location>
</feature>
<feature type="transmembrane region" description="Helical" evidence="1">
    <location>
        <begin position="211"/>
        <end position="231"/>
    </location>
</feature>
<feature type="transmembrane region" description="Helical" evidence="1">
    <location>
        <begin position="242"/>
        <end position="262"/>
    </location>
</feature>
<feature type="transmembrane region" description="Helical" evidence="1">
    <location>
        <begin position="272"/>
        <end position="292"/>
    </location>
</feature>
<feature type="transmembrane region" description="Helical" evidence="1">
    <location>
        <begin position="313"/>
        <end position="333"/>
    </location>
</feature>
<feature type="transmembrane region" description="Helical" evidence="1">
    <location>
        <begin position="334"/>
        <end position="354"/>
    </location>
</feature>
<feature type="transmembrane region" description="Helical" evidence="1">
    <location>
        <begin position="386"/>
        <end position="406"/>
    </location>
</feature>
<feature type="transmembrane region" description="Helical" evidence="1">
    <location>
        <begin position="417"/>
        <end position="437"/>
    </location>
</feature>
<feature type="transmembrane region" description="Helical" evidence="1">
    <location>
        <begin position="462"/>
        <end position="482"/>
    </location>
</feature>
<geneLocation type="chloroplast"/>
<reference key="1">
    <citation type="journal article" date="2004" name="Plant Physiol.">
        <title>A comparison of rice chloroplast genomes.</title>
        <authorList>
            <person name="Tang J."/>
            <person name="Xia H."/>
            <person name="Cao M."/>
            <person name="Zhang X."/>
            <person name="Zeng W."/>
            <person name="Hu S."/>
            <person name="Tong W."/>
            <person name="Wang J."/>
            <person name="Wang J."/>
            <person name="Yu J."/>
            <person name="Yang H."/>
            <person name="Zhu L."/>
        </authorList>
    </citation>
    <scope>NUCLEOTIDE SEQUENCE [LARGE SCALE GENOMIC DNA]</scope>
    <source>
        <strain>cv. PA64s</strain>
    </source>
</reference>
<keyword id="KW-0150">Chloroplast</keyword>
<keyword id="KW-0472">Membrane</keyword>
<keyword id="KW-0520">NAD</keyword>
<keyword id="KW-0521">NADP</keyword>
<keyword id="KW-0934">Plastid</keyword>
<keyword id="KW-0618">Plastoquinone</keyword>
<keyword id="KW-0874">Quinone</keyword>
<keyword id="KW-0793">Thylakoid</keyword>
<keyword id="KW-1278">Translocase</keyword>
<keyword id="KW-0812">Transmembrane</keyword>
<keyword id="KW-1133">Transmembrane helix</keyword>
<accession>P0C323</accession>
<accession>P12127</accession>
<accession>Q6QXX4</accession>
<accession>Q6QY37</accession>
<comment type="catalytic activity">
    <reaction>
        <text>a plastoquinone + NADH + (n+1) H(+)(in) = a plastoquinol + NAD(+) + n H(+)(out)</text>
        <dbReference type="Rhea" id="RHEA:42608"/>
        <dbReference type="Rhea" id="RHEA-COMP:9561"/>
        <dbReference type="Rhea" id="RHEA-COMP:9562"/>
        <dbReference type="ChEBI" id="CHEBI:15378"/>
        <dbReference type="ChEBI" id="CHEBI:17757"/>
        <dbReference type="ChEBI" id="CHEBI:57540"/>
        <dbReference type="ChEBI" id="CHEBI:57945"/>
        <dbReference type="ChEBI" id="CHEBI:62192"/>
    </reaction>
</comment>
<comment type="catalytic activity">
    <reaction>
        <text>a plastoquinone + NADPH + (n+1) H(+)(in) = a plastoquinol + NADP(+) + n H(+)(out)</text>
        <dbReference type="Rhea" id="RHEA:42612"/>
        <dbReference type="Rhea" id="RHEA-COMP:9561"/>
        <dbReference type="Rhea" id="RHEA-COMP:9562"/>
        <dbReference type="ChEBI" id="CHEBI:15378"/>
        <dbReference type="ChEBI" id="CHEBI:17757"/>
        <dbReference type="ChEBI" id="CHEBI:57783"/>
        <dbReference type="ChEBI" id="CHEBI:58349"/>
        <dbReference type="ChEBI" id="CHEBI:62192"/>
    </reaction>
</comment>
<comment type="subcellular location">
    <subcellularLocation>
        <location evidence="2">Plastid</location>
        <location evidence="2">Chloroplast thylakoid membrane</location>
        <topology evidence="2">Multi-pass membrane protein</topology>
    </subcellularLocation>
</comment>
<comment type="similarity">
    <text evidence="2">Belongs to the complex I subunit 4 family.</text>
</comment>